<sequence length="337" mass="36288">MENPRRVQILRAIVEDYVHSREPVGSKALVERHRLPVSSATVRNDMAALEEAGLIVAPHTSSGRIPTDRGYRVFVDQIAALQPLTGAQRRAIQVFLEGAHDLDDVMERTVRLLAQLTHQAAVIQYPVRAGITVRHVELVDVGAGTVLVILIPTSGRVAQRAVELAEPLDEVQLLELRARVLARVLGSTLETVPGRVAGLAEELPEALRHAGDRVSEALAVLAAASDEHRLVMAGTANLARFSGDFPQSISPVLEALEEQVTMLRLLSAMQQDERGVAVRIGSEECDDPLAEASVVATGYGPHAASKVGVVGPTRMDYPTTMAAVRAVARYLSRNLGD</sequence>
<reference key="1">
    <citation type="journal article" date="2008" name="J. Bacteriol.">
        <title>Complete genome sequence of the soil actinomycete Kocuria rhizophila.</title>
        <authorList>
            <person name="Takarada H."/>
            <person name="Sekine M."/>
            <person name="Kosugi H."/>
            <person name="Matsuo Y."/>
            <person name="Fujisawa T."/>
            <person name="Omata S."/>
            <person name="Kishi E."/>
            <person name="Shimizu A."/>
            <person name="Tsukatani N."/>
            <person name="Tanikawa S."/>
            <person name="Fujita N."/>
            <person name="Harayama S."/>
        </authorList>
    </citation>
    <scope>NUCLEOTIDE SEQUENCE [LARGE SCALE GENOMIC DNA]</scope>
    <source>
        <strain>ATCC 9341 / DSM 348 / NBRC 103217 / DC2201</strain>
    </source>
</reference>
<protein>
    <recommendedName>
        <fullName evidence="1">Heat-inducible transcription repressor HrcA</fullName>
    </recommendedName>
</protein>
<feature type="chain" id="PRO_1000092813" description="Heat-inducible transcription repressor HrcA">
    <location>
        <begin position="1"/>
        <end position="337"/>
    </location>
</feature>
<comment type="function">
    <text evidence="1">Negative regulator of class I heat shock genes (grpE-dnaK-dnaJ and groELS operons). Prevents heat-shock induction of these operons.</text>
</comment>
<comment type="similarity">
    <text evidence="1">Belongs to the HrcA family.</text>
</comment>
<dbReference type="EMBL" id="AP009152">
    <property type="protein sequence ID" value="BAG29648.1"/>
    <property type="molecule type" value="Genomic_DNA"/>
</dbReference>
<dbReference type="RefSeq" id="WP_012398369.1">
    <property type="nucleotide sequence ID" value="NC_010617.1"/>
</dbReference>
<dbReference type="SMR" id="B2GHU5"/>
<dbReference type="STRING" id="378753.KRH_13010"/>
<dbReference type="KEGG" id="krh:KRH_13010"/>
<dbReference type="eggNOG" id="COG1420">
    <property type="taxonomic scope" value="Bacteria"/>
</dbReference>
<dbReference type="HOGENOM" id="CLU_050019_2_0_11"/>
<dbReference type="OrthoDB" id="9783139at2"/>
<dbReference type="Proteomes" id="UP000008838">
    <property type="component" value="Chromosome"/>
</dbReference>
<dbReference type="GO" id="GO:0003677">
    <property type="term" value="F:DNA binding"/>
    <property type="evidence" value="ECO:0007669"/>
    <property type="project" value="InterPro"/>
</dbReference>
<dbReference type="GO" id="GO:0045892">
    <property type="term" value="P:negative regulation of DNA-templated transcription"/>
    <property type="evidence" value="ECO:0007669"/>
    <property type="project" value="UniProtKB-UniRule"/>
</dbReference>
<dbReference type="FunFam" id="1.10.10.10:FF:000049">
    <property type="entry name" value="Heat-inducible transcription repressor HrcA"/>
    <property type="match status" value="1"/>
</dbReference>
<dbReference type="Gene3D" id="3.30.450.40">
    <property type="match status" value="1"/>
</dbReference>
<dbReference type="Gene3D" id="3.30.390.60">
    <property type="entry name" value="Heat-inducible transcription repressor hrca homolog, domain 3"/>
    <property type="match status" value="1"/>
</dbReference>
<dbReference type="Gene3D" id="1.10.10.10">
    <property type="entry name" value="Winged helix-like DNA-binding domain superfamily/Winged helix DNA-binding domain"/>
    <property type="match status" value="1"/>
</dbReference>
<dbReference type="HAMAP" id="MF_00081">
    <property type="entry name" value="HrcA"/>
    <property type="match status" value="1"/>
</dbReference>
<dbReference type="InterPro" id="IPR029016">
    <property type="entry name" value="GAF-like_dom_sf"/>
</dbReference>
<dbReference type="InterPro" id="IPR002571">
    <property type="entry name" value="HrcA"/>
</dbReference>
<dbReference type="InterPro" id="IPR021153">
    <property type="entry name" value="HrcA_C"/>
</dbReference>
<dbReference type="InterPro" id="IPR036388">
    <property type="entry name" value="WH-like_DNA-bd_sf"/>
</dbReference>
<dbReference type="InterPro" id="IPR036390">
    <property type="entry name" value="WH_DNA-bd_sf"/>
</dbReference>
<dbReference type="InterPro" id="IPR023120">
    <property type="entry name" value="WHTH_transcript_rep_HrcA_IDD"/>
</dbReference>
<dbReference type="NCBIfam" id="TIGR00331">
    <property type="entry name" value="hrcA"/>
    <property type="match status" value="1"/>
</dbReference>
<dbReference type="PANTHER" id="PTHR34824">
    <property type="entry name" value="HEAT-INDUCIBLE TRANSCRIPTION REPRESSOR HRCA"/>
    <property type="match status" value="1"/>
</dbReference>
<dbReference type="PANTHER" id="PTHR34824:SF1">
    <property type="entry name" value="HEAT-INDUCIBLE TRANSCRIPTION REPRESSOR HRCA"/>
    <property type="match status" value="1"/>
</dbReference>
<dbReference type="Pfam" id="PF01628">
    <property type="entry name" value="HrcA"/>
    <property type="match status" value="1"/>
</dbReference>
<dbReference type="PIRSF" id="PIRSF005485">
    <property type="entry name" value="HrcA"/>
    <property type="match status" value="1"/>
</dbReference>
<dbReference type="SUPFAM" id="SSF55781">
    <property type="entry name" value="GAF domain-like"/>
    <property type="match status" value="1"/>
</dbReference>
<dbReference type="SUPFAM" id="SSF46785">
    <property type="entry name" value="Winged helix' DNA-binding domain"/>
    <property type="match status" value="1"/>
</dbReference>
<gene>
    <name evidence="1" type="primary">hrcA</name>
    <name type="ordered locus">KRH_13010</name>
</gene>
<evidence type="ECO:0000255" key="1">
    <source>
        <dbReference type="HAMAP-Rule" id="MF_00081"/>
    </source>
</evidence>
<accession>B2GHU5</accession>
<organism>
    <name type="scientific">Kocuria rhizophila (strain ATCC 9341 / DSM 348 / NBRC 103217 / DC2201)</name>
    <dbReference type="NCBI Taxonomy" id="378753"/>
    <lineage>
        <taxon>Bacteria</taxon>
        <taxon>Bacillati</taxon>
        <taxon>Actinomycetota</taxon>
        <taxon>Actinomycetes</taxon>
        <taxon>Micrococcales</taxon>
        <taxon>Micrococcaceae</taxon>
        <taxon>Kocuria</taxon>
    </lineage>
</organism>
<name>HRCA_KOCRD</name>
<keyword id="KW-1185">Reference proteome</keyword>
<keyword id="KW-0678">Repressor</keyword>
<keyword id="KW-0346">Stress response</keyword>
<keyword id="KW-0804">Transcription</keyword>
<keyword id="KW-0805">Transcription regulation</keyword>
<proteinExistence type="inferred from homology"/>